<gene>
    <name evidence="1" type="primary">rlmE</name>
    <name evidence="1" type="synonym">ftsJ</name>
    <name evidence="1" type="synonym">rrmJ</name>
    <name type="ordered locus">blr3970</name>
</gene>
<dbReference type="EC" id="2.1.1.166" evidence="1"/>
<dbReference type="EMBL" id="BA000040">
    <property type="protein sequence ID" value="BAC49235.1"/>
    <property type="molecule type" value="Genomic_DNA"/>
</dbReference>
<dbReference type="RefSeq" id="NP_770610.1">
    <property type="nucleotide sequence ID" value="NC_004463.1"/>
</dbReference>
<dbReference type="RefSeq" id="WP_011086747.1">
    <property type="nucleotide sequence ID" value="NC_004463.1"/>
</dbReference>
<dbReference type="SMR" id="Q89N72"/>
<dbReference type="FunCoup" id="Q89N72">
    <property type="interactions" value="553"/>
</dbReference>
<dbReference type="STRING" id="224911.AAV28_16865"/>
<dbReference type="EnsemblBacteria" id="BAC49235">
    <property type="protein sequence ID" value="BAC49235"/>
    <property type="gene ID" value="BAC49235"/>
</dbReference>
<dbReference type="GeneID" id="46490974"/>
<dbReference type="KEGG" id="bja:blr3970"/>
<dbReference type="PATRIC" id="fig|224911.44.peg.3664"/>
<dbReference type="eggNOG" id="COG0293">
    <property type="taxonomic scope" value="Bacteria"/>
</dbReference>
<dbReference type="HOGENOM" id="CLU_009422_4_0_5"/>
<dbReference type="InParanoid" id="Q89N72"/>
<dbReference type="OrthoDB" id="9790080at2"/>
<dbReference type="PhylomeDB" id="Q89N72"/>
<dbReference type="Proteomes" id="UP000002526">
    <property type="component" value="Chromosome"/>
</dbReference>
<dbReference type="GO" id="GO:0005737">
    <property type="term" value="C:cytoplasm"/>
    <property type="evidence" value="ECO:0007669"/>
    <property type="project" value="UniProtKB-SubCell"/>
</dbReference>
<dbReference type="GO" id="GO:0008650">
    <property type="term" value="F:rRNA (uridine-2'-O-)-methyltransferase activity"/>
    <property type="evidence" value="ECO:0000318"/>
    <property type="project" value="GO_Central"/>
</dbReference>
<dbReference type="GO" id="GO:0001510">
    <property type="term" value="P:RNA methylation"/>
    <property type="evidence" value="ECO:0000318"/>
    <property type="project" value="GO_Central"/>
</dbReference>
<dbReference type="FunFam" id="3.40.50.150:FF:000005">
    <property type="entry name" value="Ribosomal RNA large subunit methyltransferase E"/>
    <property type="match status" value="1"/>
</dbReference>
<dbReference type="Gene3D" id="3.40.50.150">
    <property type="entry name" value="Vaccinia Virus protein VP39"/>
    <property type="match status" value="1"/>
</dbReference>
<dbReference type="HAMAP" id="MF_01547">
    <property type="entry name" value="RNA_methyltr_E"/>
    <property type="match status" value="1"/>
</dbReference>
<dbReference type="InterPro" id="IPR050082">
    <property type="entry name" value="RNA_methyltr_RlmE"/>
</dbReference>
<dbReference type="InterPro" id="IPR002877">
    <property type="entry name" value="RNA_MeTrfase_FtsJ_dom"/>
</dbReference>
<dbReference type="InterPro" id="IPR015507">
    <property type="entry name" value="rRNA-MeTfrase_E"/>
</dbReference>
<dbReference type="InterPro" id="IPR029063">
    <property type="entry name" value="SAM-dependent_MTases_sf"/>
</dbReference>
<dbReference type="PANTHER" id="PTHR10920">
    <property type="entry name" value="RIBOSOMAL RNA METHYLTRANSFERASE"/>
    <property type="match status" value="1"/>
</dbReference>
<dbReference type="PANTHER" id="PTHR10920:SF18">
    <property type="entry name" value="RRNA METHYLTRANSFERASE 2, MITOCHONDRIAL"/>
    <property type="match status" value="1"/>
</dbReference>
<dbReference type="Pfam" id="PF01728">
    <property type="entry name" value="FtsJ"/>
    <property type="match status" value="1"/>
</dbReference>
<dbReference type="PIRSF" id="PIRSF005461">
    <property type="entry name" value="23S_rRNA_mtase"/>
    <property type="match status" value="1"/>
</dbReference>
<dbReference type="SUPFAM" id="SSF53335">
    <property type="entry name" value="S-adenosyl-L-methionine-dependent methyltransferases"/>
    <property type="match status" value="1"/>
</dbReference>
<feature type="chain" id="PRO_0000155477" description="Ribosomal RNA large subunit methyltransferase E">
    <location>
        <begin position="1"/>
        <end position="228"/>
    </location>
</feature>
<feature type="active site" description="Proton acceptor" evidence="1">
    <location>
        <position position="179"/>
    </location>
</feature>
<feature type="binding site" evidence="1">
    <location>
        <position position="76"/>
    </location>
    <ligand>
        <name>S-adenosyl-L-methionine</name>
        <dbReference type="ChEBI" id="CHEBI:59789"/>
    </ligand>
</feature>
<feature type="binding site" evidence="1">
    <location>
        <position position="78"/>
    </location>
    <ligand>
        <name>S-adenosyl-L-methionine</name>
        <dbReference type="ChEBI" id="CHEBI:59789"/>
    </ligand>
</feature>
<feature type="binding site" evidence="1">
    <location>
        <position position="99"/>
    </location>
    <ligand>
        <name>S-adenosyl-L-methionine</name>
        <dbReference type="ChEBI" id="CHEBI:59789"/>
    </ligand>
</feature>
<feature type="binding site" evidence="1">
    <location>
        <position position="115"/>
    </location>
    <ligand>
        <name>S-adenosyl-L-methionine</name>
        <dbReference type="ChEBI" id="CHEBI:59789"/>
    </ligand>
</feature>
<feature type="binding site" evidence="1">
    <location>
        <position position="139"/>
    </location>
    <ligand>
        <name>S-adenosyl-L-methionine</name>
        <dbReference type="ChEBI" id="CHEBI:59789"/>
    </ligand>
</feature>
<reference key="1">
    <citation type="journal article" date="2002" name="DNA Res.">
        <title>Complete genomic sequence of nitrogen-fixing symbiotic bacterium Bradyrhizobium japonicum USDA110.</title>
        <authorList>
            <person name="Kaneko T."/>
            <person name="Nakamura Y."/>
            <person name="Sato S."/>
            <person name="Minamisawa K."/>
            <person name="Uchiumi T."/>
            <person name="Sasamoto S."/>
            <person name="Watanabe A."/>
            <person name="Idesawa K."/>
            <person name="Iriguchi M."/>
            <person name="Kawashima K."/>
            <person name="Kohara M."/>
            <person name="Matsumoto M."/>
            <person name="Shimpo S."/>
            <person name="Tsuruoka H."/>
            <person name="Wada T."/>
            <person name="Yamada M."/>
            <person name="Tabata S."/>
        </authorList>
    </citation>
    <scope>NUCLEOTIDE SEQUENCE [LARGE SCALE GENOMIC DNA]</scope>
    <source>
        <strain>JCM 10833 / BCRC 13528 / IAM 13628 / NBRC 14792 / USDA 110</strain>
    </source>
</reference>
<sequence>MAKDTTGRLHVQVKTGGKRKLSSKLWLERQLNDPYVAKAKAAGYRSRAAFKLLEIDDKFRLLKHGMAVVDLGAAPGGWSQIAAKRVGSVDGKGKVVAIDLLEMPEIAGVEFAQLDFMDNDAPAKLTAMLGGGADVVMSDMAANTTGHRKTDQLRIVGLIETAAAFACDVLKPGGTFLAKTFQSGADADLLAQLKRDFATVRHVKPAASRQDSSERYVLATGFRGGAKA</sequence>
<keyword id="KW-0963">Cytoplasm</keyword>
<keyword id="KW-0489">Methyltransferase</keyword>
<keyword id="KW-1185">Reference proteome</keyword>
<keyword id="KW-0698">rRNA processing</keyword>
<keyword id="KW-0949">S-adenosyl-L-methionine</keyword>
<keyword id="KW-0808">Transferase</keyword>
<evidence type="ECO:0000255" key="1">
    <source>
        <dbReference type="HAMAP-Rule" id="MF_01547"/>
    </source>
</evidence>
<proteinExistence type="inferred from homology"/>
<organism>
    <name type="scientific">Bradyrhizobium diazoefficiens (strain JCM 10833 / BCRC 13528 / IAM 13628 / NBRC 14792 / USDA 110)</name>
    <dbReference type="NCBI Taxonomy" id="224911"/>
    <lineage>
        <taxon>Bacteria</taxon>
        <taxon>Pseudomonadati</taxon>
        <taxon>Pseudomonadota</taxon>
        <taxon>Alphaproteobacteria</taxon>
        <taxon>Hyphomicrobiales</taxon>
        <taxon>Nitrobacteraceae</taxon>
        <taxon>Bradyrhizobium</taxon>
    </lineage>
</organism>
<protein>
    <recommendedName>
        <fullName evidence="1">Ribosomal RNA large subunit methyltransferase E</fullName>
        <ecNumber evidence="1">2.1.1.166</ecNumber>
    </recommendedName>
    <alternativeName>
        <fullName evidence="1">23S rRNA Um2552 methyltransferase</fullName>
    </alternativeName>
    <alternativeName>
        <fullName evidence="1">rRNA (uridine-2'-O-)-methyltransferase</fullName>
    </alternativeName>
</protein>
<accession>Q89N72</accession>
<name>RLME_BRADU</name>
<comment type="function">
    <text evidence="1">Specifically methylates the uridine in position 2552 of 23S rRNA at the 2'-O position of the ribose in the fully assembled 50S ribosomal subunit.</text>
</comment>
<comment type="catalytic activity">
    <reaction evidence="1">
        <text>uridine(2552) in 23S rRNA + S-adenosyl-L-methionine = 2'-O-methyluridine(2552) in 23S rRNA + S-adenosyl-L-homocysteine + H(+)</text>
        <dbReference type="Rhea" id="RHEA:42720"/>
        <dbReference type="Rhea" id="RHEA-COMP:10202"/>
        <dbReference type="Rhea" id="RHEA-COMP:10203"/>
        <dbReference type="ChEBI" id="CHEBI:15378"/>
        <dbReference type="ChEBI" id="CHEBI:57856"/>
        <dbReference type="ChEBI" id="CHEBI:59789"/>
        <dbReference type="ChEBI" id="CHEBI:65315"/>
        <dbReference type="ChEBI" id="CHEBI:74478"/>
        <dbReference type="EC" id="2.1.1.166"/>
    </reaction>
</comment>
<comment type="subcellular location">
    <subcellularLocation>
        <location evidence="1">Cytoplasm</location>
    </subcellularLocation>
</comment>
<comment type="similarity">
    <text evidence="1">Belongs to the class I-like SAM-binding methyltransferase superfamily. RNA methyltransferase RlmE family.</text>
</comment>